<dbReference type="EMBL" id="ACFL01000312">
    <property type="protein sequence ID" value="EEU05521.1"/>
    <property type="molecule type" value="Genomic_DNA"/>
</dbReference>
<dbReference type="OrthoDB" id="41995at4893"/>
<dbReference type="Proteomes" id="UP000008073">
    <property type="component" value="Unassembled WGS sequence"/>
</dbReference>
<dbReference type="GO" id="GO:0030479">
    <property type="term" value="C:actin cortical patch"/>
    <property type="evidence" value="ECO:0007669"/>
    <property type="project" value="InterPro"/>
</dbReference>
<dbReference type="GO" id="GO:0045121">
    <property type="term" value="C:membrane raft"/>
    <property type="evidence" value="ECO:0007669"/>
    <property type="project" value="UniProtKB-SubCell"/>
</dbReference>
<dbReference type="GO" id="GO:0051016">
    <property type="term" value="P:barbed-end actin filament capping"/>
    <property type="evidence" value="ECO:0007669"/>
    <property type="project" value="InterPro"/>
</dbReference>
<dbReference type="InterPro" id="IPR031370">
    <property type="entry name" value="Aim3"/>
</dbReference>
<dbReference type="Pfam" id="PF17096">
    <property type="entry name" value="AIM3"/>
    <property type="match status" value="1"/>
</dbReference>
<name>AIM3_YEAS2</name>
<organism>
    <name type="scientific">Saccharomyces cerevisiae (strain JAY291)</name>
    <name type="common">Baker's yeast</name>
    <dbReference type="NCBI Taxonomy" id="574961"/>
    <lineage>
        <taxon>Eukaryota</taxon>
        <taxon>Fungi</taxon>
        <taxon>Dikarya</taxon>
        <taxon>Ascomycota</taxon>
        <taxon>Saccharomycotina</taxon>
        <taxon>Saccharomycetes</taxon>
        <taxon>Saccharomycetales</taxon>
        <taxon>Saccharomycetaceae</taxon>
        <taxon>Saccharomyces</taxon>
    </lineage>
</organism>
<protein>
    <recommendedName>
        <fullName>Altered inheritance of mitochondria protein 3</fullName>
    </recommendedName>
</protein>
<accession>C7GUK6</accession>
<feature type="chain" id="PRO_0000399603" description="Altered inheritance of mitochondria protein 3">
    <location>
        <begin position="1"/>
        <end position="947"/>
    </location>
</feature>
<feature type="region of interest" description="Disordered" evidence="3">
    <location>
        <begin position="1"/>
        <end position="332"/>
    </location>
</feature>
<feature type="region of interest" description="Disordered" evidence="3">
    <location>
        <begin position="354"/>
        <end position="810"/>
    </location>
</feature>
<feature type="region of interest" description="Disordered" evidence="3">
    <location>
        <begin position="824"/>
        <end position="904"/>
    </location>
</feature>
<feature type="compositionally biased region" description="Basic residues" evidence="3">
    <location>
        <begin position="36"/>
        <end position="54"/>
    </location>
</feature>
<feature type="compositionally biased region" description="Acidic residues" evidence="3">
    <location>
        <begin position="59"/>
        <end position="69"/>
    </location>
</feature>
<feature type="compositionally biased region" description="Basic and acidic residues" evidence="3">
    <location>
        <begin position="70"/>
        <end position="84"/>
    </location>
</feature>
<feature type="compositionally biased region" description="Low complexity" evidence="3">
    <location>
        <begin position="93"/>
        <end position="105"/>
    </location>
</feature>
<feature type="compositionally biased region" description="Low complexity" evidence="3">
    <location>
        <begin position="130"/>
        <end position="163"/>
    </location>
</feature>
<feature type="compositionally biased region" description="Polar residues" evidence="3">
    <location>
        <begin position="177"/>
        <end position="255"/>
    </location>
</feature>
<feature type="compositionally biased region" description="Low complexity" evidence="3">
    <location>
        <begin position="256"/>
        <end position="289"/>
    </location>
</feature>
<feature type="compositionally biased region" description="Low complexity" evidence="3">
    <location>
        <begin position="313"/>
        <end position="332"/>
    </location>
</feature>
<feature type="compositionally biased region" description="Polar residues" evidence="3">
    <location>
        <begin position="354"/>
        <end position="367"/>
    </location>
</feature>
<feature type="compositionally biased region" description="Pro residues" evidence="3">
    <location>
        <begin position="379"/>
        <end position="395"/>
    </location>
</feature>
<feature type="compositionally biased region" description="Polar residues" evidence="3">
    <location>
        <begin position="466"/>
        <end position="475"/>
    </location>
</feature>
<feature type="compositionally biased region" description="Basic and acidic residues" evidence="3">
    <location>
        <begin position="488"/>
        <end position="502"/>
    </location>
</feature>
<feature type="compositionally biased region" description="Basic and acidic residues" evidence="3">
    <location>
        <begin position="526"/>
        <end position="541"/>
    </location>
</feature>
<feature type="compositionally biased region" description="Polar residues" evidence="3">
    <location>
        <begin position="633"/>
        <end position="644"/>
    </location>
</feature>
<feature type="compositionally biased region" description="Low complexity" evidence="3">
    <location>
        <begin position="667"/>
        <end position="676"/>
    </location>
</feature>
<feature type="compositionally biased region" description="Basic and acidic residues" evidence="3">
    <location>
        <begin position="749"/>
        <end position="759"/>
    </location>
</feature>
<feature type="compositionally biased region" description="Polar residues" evidence="3">
    <location>
        <begin position="763"/>
        <end position="774"/>
    </location>
</feature>
<feature type="compositionally biased region" description="Pro residues" evidence="3">
    <location>
        <begin position="862"/>
        <end position="879"/>
    </location>
</feature>
<feature type="compositionally biased region" description="Basic residues" evidence="3">
    <location>
        <begin position="888"/>
        <end position="899"/>
    </location>
</feature>
<feature type="modified residue" description="Phosphoserine" evidence="2">
    <location>
        <position position="57"/>
    </location>
</feature>
<feature type="modified residue" description="Phosphoserine" evidence="2">
    <location>
        <position position="58"/>
    </location>
</feature>
<feature type="modified residue" description="Phosphoserine" evidence="2">
    <location>
        <position position="64"/>
    </location>
</feature>
<feature type="modified residue" description="Phosphoserine" evidence="2">
    <location>
        <position position="476"/>
    </location>
</feature>
<feature type="modified residue" description="Phosphothreonine" evidence="2">
    <location>
        <position position="729"/>
    </location>
</feature>
<feature type="modified residue" description="Phosphothreonine" evidence="2">
    <location>
        <position position="861"/>
    </location>
</feature>
<gene>
    <name type="primary">AIM3</name>
    <name type="ORF">C1Q_04126</name>
</gene>
<sequence length="947" mass="103934">MGFWENNKDSITSGLKSAGKYGYQGTKYVAKTGYKASKKHYNNSKARRERKSGKKNSSDEEYDSEDEMEYERKPTDIRSLKDPKSFPPPPLKPGQKTYTGQQQQQMPNGQASYAFQGAYQGQPGAGSMEQSQYAQPQYNQYPQQQLQQGVMPQQQQLQQGVVPQQPPIYGEQVPPYGSNSNATSYQSLPQQNQPQNAIPSQVSLNSASQQSTGFVSQNLQYGTQSSNPAPSPSFQNGLQCHQQPQYVSHGSTNLGQSQFPSGQQQQPTTQFGQQVLPSPAQPQQQQQGQPLPPPRGQVILPAPGEPLSNGFGQQQQQQQQQQQPLNQNNALLPQMNVEGVSGMAAVQPVYGQAMSSTTNMQDSNPSYGASPMQGQPPVGGQPPVPVRMQPQPPQPMQQGNIYPIEPSLDSTGSTPHFEVTPFDPDAPAPKPKIDIPTVDVSSLPPPPTHRDRGAVVHQEPAPSGKIQPNTTSSAASLPAKHSRTTTADNERNSGNKENDESTSKSSILGHYDVDVNIMPPPKPFRHGLDSVPSEHTRKNAPERAVPILPPRNNVEPPPPPSRGNFERTESVLSTNAANVQEDPISNFLPPPKPFRHTETKQNQNSKASPVEMKGEVLPGHPSEEDRNVEPSLVPQSKPQSQSQFRRAHMETQPIQNFQPPPKPFRRSQSSNSSDSSYTIDGPEANHGRGRGRIAKHHDGDEYNPKSENSTENGRLGDAPNSFIRKRAPTPPAPSRSEKLHEGTITSEVDSSKDANKYEKSIPPVTSSIQAQQSTKKAPPPVVKPKPRNFSLKANEYPKELTREATGQDEVLNSITNELSHIKLRKTNVNLEKLGGSKKVKDSSPVPSDLDEKYVSASGSITPPRPPPSRSSPKKVPPVVPKNNDNLKKKPPVVPKKKPLLKSLEPRPIEMERAYSGDISAADDNLNPFERYKRNVVPQEDDRLHKLK</sequence>
<reference key="1">
    <citation type="journal article" date="2009" name="Genome Res.">
        <title>Genome structure of a Saccharomyces cerevisiae strain widely used in bioethanol production.</title>
        <authorList>
            <person name="Argueso J.L."/>
            <person name="Carazzolle M.F."/>
            <person name="Mieczkowski P.A."/>
            <person name="Duarte F.M."/>
            <person name="Netto O.V.C."/>
            <person name="Missawa S.K."/>
            <person name="Galzerani F."/>
            <person name="Costa G.G.L."/>
            <person name="Vidal R.O."/>
            <person name="Noronha M.F."/>
            <person name="Dominska M."/>
            <person name="Andrietta M.G.S."/>
            <person name="Andrietta S.R."/>
            <person name="Cunha A.F."/>
            <person name="Gomes L.H."/>
            <person name="Tavares F.C.A."/>
            <person name="Alcarde A.R."/>
            <person name="Dietrich F.S."/>
            <person name="McCusker J.H."/>
            <person name="Petes T.D."/>
            <person name="Pereira G.A.G."/>
        </authorList>
    </citation>
    <scope>NUCLEOTIDE SEQUENCE [LARGE SCALE GENOMIC DNA]</scope>
    <source>
        <strain>JAY291</strain>
    </source>
</reference>
<comment type="subunit">
    <text evidence="1">Interacts with RVS167.</text>
</comment>
<comment type="subcellular location">
    <subcellularLocation>
        <location evidence="1">Membrane raft</location>
        <topology evidence="1">Peripheral membrane protein</topology>
    </subcellularLocation>
    <text evidence="1">Localizes within detergent-insoluble glycolipid-enriched membranes.</text>
</comment>
<comment type="similarity">
    <text evidence="4">Belongs to the AIM3 family.</text>
</comment>
<proteinExistence type="inferred from homology"/>
<evidence type="ECO:0000250" key="1"/>
<evidence type="ECO:0000250" key="2">
    <source>
        <dbReference type="UniProtKB" id="P38266"/>
    </source>
</evidence>
<evidence type="ECO:0000256" key="3">
    <source>
        <dbReference type="SAM" id="MobiDB-lite"/>
    </source>
</evidence>
<evidence type="ECO:0000305" key="4"/>
<keyword id="KW-0472">Membrane</keyword>
<keyword id="KW-0597">Phosphoprotein</keyword>